<dbReference type="EMBL" id="X58924">
    <property type="protein sequence ID" value="CAA41724.1"/>
    <property type="molecule type" value="Genomic_DNA"/>
</dbReference>
<dbReference type="EMBL" id="CP001956">
    <property type="protein sequence ID" value="ADE02429.1"/>
    <property type="molecule type" value="Genomic_DNA"/>
</dbReference>
<dbReference type="PIR" id="S34136">
    <property type="entry name" value="S34136"/>
</dbReference>
<dbReference type="RefSeq" id="WP_004043002.1">
    <property type="nucleotide sequence ID" value="NC_013967.1"/>
</dbReference>
<dbReference type="SMR" id="P41198"/>
<dbReference type="IntAct" id="P41198">
    <property type="interactions" value="7"/>
</dbReference>
<dbReference type="STRING" id="309800.HVO_2756"/>
<dbReference type="PaxDb" id="309800-C498_09069"/>
<dbReference type="EnsemblBacteria" id="ADE02429">
    <property type="protein sequence ID" value="ADE02429"/>
    <property type="gene ID" value="HVO_2756"/>
</dbReference>
<dbReference type="GeneID" id="8926688"/>
<dbReference type="KEGG" id="hvo:HVO_2756"/>
<dbReference type="eggNOG" id="arCOG04288">
    <property type="taxonomic scope" value="Archaea"/>
</dbReference>
<dbReference type="HOGENOM" id="CLU_053173_0_0_2"/>
<dbReference type="OrthoDB" id="30930at2157"/>
<dbReference type="Proteomes" id="UP000008243">
    <property type="component" value="Chromosome"/>
</dbReference>
<dbReference type="GO" id="GO:0022625">
    <property type="term" value="C:cytosolic large ribosomal subunit"/>
    <property type="evidence" value="ECO:0007669"/>
    <property type="project" value="TreeGrafter"/>
</dbReference>
<dbReference type="GO" id="GO:0070180">
    <property type="term" value="F:large ribosomal subunit rRNA binding"/>
    <property type="evidence" value="ECO:0007669"/>
    <property type="project" value="UniProtKB-UniRule"/>
</dbReference>
<dbReference type="GO" id="GO:0003735">
    <property type="term" value="F:structural constituent of ribosome"/>
    <property type="evidence" value="ECO:0007669"/>
    <property type="project" value="TreeGrafter"/>
</dbReference>
<dbReference type="GO" id="GO:0002181">
    <property type="term" value="P:cytoplasmic translation"/>
    <property type="evidence" value="ECO:0007669"/>
    <property type="project" value="TreeGrafter"/>
</dbReference>
<dbReference type="GO" id="GO:0000027">
    <property type="term" value="P:ribosomal large subunit assembly"/>
    <property type="evidence" value="ECO:0007669"/>
    <property type="project" value="TreeGrafter"/>
</dbReference>
<dbReference type="CDD" id="cd05795">
    <property type="entry name" value="Ribosomal_P0_L10e"/>
    <property type="match status" value="1"/>
</dbReference>
<dbReference type="Gene3D" id="3.30.70.1730">
    <property type="match status" value="1"/>
</dbReference>
<dbReference type="Gene3D" id="3.90.105.20">
    <property type="match status" value="1"/>
</dbReference>
<dbReference type="Gene3D" id="6.10.140.760">
    <property type="match status" value="1"/>
</dbReference>
<dbReference type="HAMAP" id="MF_00280">
    <property type="entry name" value="Ribosomal_uL10_arch"/>
    <property type="match status" value="1"/>
</dbReference>
<dbReference type="InterPro" id="IPR050323">
    <property type="entry name" value="Ribosomal_protein_uL10"/>
</dbReference>
<dbReference type="InterPro" id="IPR001790">
    <property type="entry name" value="Ribosomal_uL10"/>
</dbReference>
<dbReference type="InterPro" id="IPR040637">
    <property type="entry name" value="Ribosomal_uL10-like_insert"/>
</dbReference>
<dbReference type="InterPro" id="IPR043164">
    <property type="entry name" value="Ribosomal_uL10-like_insert_sf"/>
</dbReference>
<dbReference type="InterPro" id="IPR043141">
    <property type="entry name" value="Ribosomal_uL10-like_sf"/>
</dbReference>
<dbReference type="InterPro" id="IPR022909">
    <property type="entry name" value="Ribosomal_uL10_arc"/>
</dbReference>
<dbReference type="NCBIfam" id="NF003097">
    <property type="entry name" value="PRK04019.1-4"/>
    <property type="match status" value="1"/>
</dbReference>
<dbReference type="NCBIfam" id="NF003098">
    <property type="entry name" value="PRK04019.1-5"/>
    <property type="match status" value="1"/>
</dbReference>
<dbReference type="PANTHER" id="PTHR45699">
    <property type="entry name" value="60S ACIDIC RIBOSOMAL PROTEIN P0"/>
    <property type="match status" value="1"/>
</dbReference>
<dbReference type="PANTHER" id="PTHR45699:SF3">
    <property type="entry name" value="LARGE RIBOSOMAL SUBUNIT PROTEIN UL10"/>
    <property type="match status" value="1"/>
</dbReference>
<dbReference type="Pfam" id="PF00466">
    <property type="entry name" value="Ribosomal_L10"/>
    <property type="match status" value="1"/>
</dbReference>
<dbReference type="Pfam" id="PF17777">
    <property type="entry name" value="RL10P_insert"/>
    <property type="match status" value="1"/>
</dbReference>
<dbReference type="SUPFAM" id="SSF160369">
    <property type="entry name" value="Ribosomal protein L10-like"/>
    <property type="match status" value="1"/>
</dbReference>
<protein>
    <recommendedName>
        <fullName evidence="1">Large ribosomal subunit protein uL10</fullName>
    </recommendedName>
    <alternativeName>
        <fullName evidence="3">50S ribosomal protein L10</fullName>
    </alternativeName>
    <alternativeName>
        <fullName evidence="1">Acidic ribosomal protein P0 homolog</fullName>
    </alternativeName>
    <alternativeName>
        <fullName>L10e</fullName>
    </alternativeName>
</protein>
<name>RL10_HALVD</name>
<feature type="chain" id="PRO_0000154791" description="Large ribosomal subunit protein uL10">
    <location>
        <begin position="1"/>
        <end position="348"/>
    </location>
</feature>
<feature type="region of interest" description="Disordered" evidence="2">
    <location>
        <begin position="291"/>
        <end position="348"/>
    </location>
</feature>
<feature type="compositionally biased region" description="Acidic residues" evidence="2">
    <location>
        <begin position="305"/>
        <end position="341"/>
    </location>
</feature>
<feature type="sequence conflict" description="In Ref. 1; CAA41724." evidence="3" ref="1">
    <original>VS</original>
    <variation>SP</variation>
    <location>
        <begin position="223"/>
        <end position="224"/>
    </location>
</feature>
<feature type="sequence conflict" description="In Ref. 1; CAA41724." evidence="3" ref="1">
    <original>N</original>
    <variation>NHS</variation>
    <location>
        <position position="284"/>
    </location>
</feature>
<feature type="sequence conflict" description="In Ref. 1; CAA41724." evidence="3" ref="1">
    <original>D</original>
    <variation>E</variation>
    <location>
        <position position="287"/>
    </location>
</feature>
<feature type="sequence conflict" description="In Ref. 1; CAA41724." evidence="3" ref="1">
    <original>G</original>
    <variation>A</variation>
    <location>
        <position position="297"/>
    </location>
</feature>
<keyword id="KW-1185">Reference proteome</keyword>
<keyword id="KW-0687">Ribonucleoprotein</keyword>
<keyword id="KW-0689">Ribosomal protein</keyword>
<keyword id="KW-0694">RNA-binding</keyword>
<keyword id="KW-0699">rRNA-binding</keyword>
<accession>P41198</accession>
<accession>D4GWB8</accession>
<sequence length="348" mass="36916">MSESEVRQTEVIPQWKREEVDELVDFIESYESVGVVGVAGIPSRQLQSMRRELHGSAAVRMSRNTLVNRALDEVNDGFEELKEYIAGQVALIGTNDNPFALFKELEASKTPAPINAGEVAPNDIVIPEGDTGVDPGPFVGELQQVGASARIMDGSIMVTEDSNVLSEGEEVSEELANVLAELGIEPKEVGLDLRGVFSEGVLFEPDELAIDVDEYRADIQSAVSAATNLSVNAVYPTAQTAPTLIAKATSEAKAVGLFANIESPDFMPELISKADAQLRALAANIDDEEALPEELRGVSAADTGAAEEEESTDEEAADADQADAAEDDDAADDDGDDEDAGDALGSLF</sequence>
<evidence type="ECO:0000255" key="1">
    <source>
        <dbReference type="HAMAP-Rule" id="MF_00280"/>
    </source>
</evidence>
<evidence type="ECO:0000256" key="2">
    <source>
        <dbReference type="SAM" id="MobiDB-lite"/>
    </source>
</evidence>
<evidence type="ECO:0000305" key="3"/>
<comment type="function">
    <text evidence="1">Forms part of the ribosomal stalk, playing a central role in the interaction of the ribosome with GTP-bound translation factors.</text>
</comment>
<comment type="subunit">
    <text evidence="1">Part of the 50S ribosomal subunit. Forms part of the ribosomal stalk which helps the ribosome interact with GTP-bound translation factors. Forms a heptameric L10(L12)2(L12)2(L12)2 complex, where L10 forms an elongated spine to which the L12 dimers bind in a sequential fashion.</text>
</comment>
<comment type="miscellaneous">
    <text>Was called L10e in this organism; in this case 'e' is for E.coli-like, not eukaryotic-type protein.</text>
</comment>
<comment type="similarity">
    <text evidence="1">Belongs to the universal ribosomal protein uL10 family.</text>
</comment>
<proteinExistence type="inferred from homology"/>
<reference key="1">
    <citation type="journal article" date="1996" name="J. Bacteriol.">
        <title>Conserved sequence elements involved in regulation of ribosomal protein gene expression in halophilic archaea.</title>
        <authorList>
            <person name="Shimmin L.C."/>
            <person name="Dennis P.P."/>
        </authorList>
    </citation>
    <scope>NUCLEOTIDE SEQUENCE [GENOMIC DNA]</scope>
    <source>
        <strain>ATCC 29605 / DSM 3757 / JCM 8879 / NBRC 14742 / NCIMB 2012 / VKM B-1768 / DS2</strain>
    </source>
</reference>
<reference key="2">
    <citation type="journal article" date="2010" name="PLoS ONE">
        <title>The complete genome sequence of Haloferax volcanii DS2, a model archaeon.</title>
        <authorList>
            <person name="Hartman A.L."/>
            <person name="Norais C."/>
            <person name="Badger J.H."/>
            <person name="Delmas S."/>
            <person name="Haldenby S."/>
            <person name="Madupu R."/>
            <person name="Robinson J."/>
            <person name="Khouri H."/>
            <person name="Ren Q."/>
            <person name="Lowe T.M."/>
            <person name="Maupin-Furlow J."/>
            <person name="Pohlschroder M."/>
            <person name="Daniels C."/>
            <person name="Pfeiffer F."/>
            <person name="Allers T."/>
            <person name="Eisen J.A."/>
        </authorList>
    </citation>
    <scope>NUCLEOTIDE SEQUENCE [LARGE SCALE GENOMIC DNA]</scope>
    <source>
        <strain>ATCC 29605 / DSM 3757 / JCM 8879 / NBRC 14742 / NCIMB 2012 / VKM B-1768 / DS2</strain>
    </source>
</reference>
<gene>
    <name evidence="1" type="primary">rpl10</name>
    <name evidence="1" type="synonym">rplP0</name>
    <name type="ordered locus">HVO_2756</name>
</gene>
<organism>
    <name type="scientific">Haloferax volcanii (strain ATCC 29605 / DSM 3757 / JCM 8879 / NBRC 14742 / NCIMB 2012 / VKM B-1768 / DS2)</name>
    <name type="common">Halobacterium volcanii</name>
    <dbReference type="NCBI Taxonomy" id="309800"/>
    <lineage>
        <taxon>Archaea</taxon>
        <taxon>Methanobacteriati</taxon>
        <taxon>Methanobacteriota</taxon>
        <taxon>Stenosarchaea group</taxon>
        <taxon>Halobacteria</taxon>
        <taxon>Halobacteriales</taxon>
        <taxon>Haloferacaceae</taxon>
        <taxon>Haloferax</taxon>
    </lineage>
</organism>